<gene>
    <name type="ordered locus">MT1378</name>
</gene>
<dbReference type="EMBL" id="AE000516">
    <property type="protein sequence ID" value="AAK45643.1"/>
    <property type="status" value="ALT_INIT"/>
    <property type="molecule type" value="Genomic_DNA"/>
</dbReference>
<dbReference type="PIR" id="E70771">
    <property type="entry name" value="E70771"/>
</dbReference>
<dbReference type="RefSeq" id="WP_003898831.1">
    <property type="nucleotide sequence ID" value="NZ_KK341227.1"/>
</dbReference>
<dbReference type="MEROPS" id="S54.029"/>
<dbReference type="KEGG" id="mtc:MT1378"/>
<dbReference type="PATRIC" id="fig|83331.31.peg.1486"/>
<dbReference type="HOGENOM" id="CLU_067823_2_0_11"/>
<dbReference type="Proteomes" id="UP000001020">
    <property type="component" value="Chromosome"/>
</dbReference>
<dbReference type="GO" id="GO:0005886">
    <property type="term" value="C:plasma membrane"/>
    <property type="evidence" value="ECO:0007669"/>
    <property type="project" value="UniProtKB-SubCell"/>
</dbReference>
<dbReference type="GO" id="GO:0004252">
    <property type="term" value="F:serine-type endopeptidase activity"/>
    <property type="evidence" value="ECO:0007669"/>
    <property type="project" value="InterPro"/>
</dbReference>
<dbReference type="FunFam" id="1.20.1540.10:FF:000029">
    <property type="entry name" value="Rhomboid protease 2"/>
    <property type="match status" value="1"/>
</dbReference>
<dbReference type="Gene3D" id="1.20.1540.10">
    <property type="entry name" value="Rhomboid-like"/>
    <property type="match status" value="1"/>
</dbReference>
<dbReference type="InterPro" id="IPR022764">
    <property type="entry name" value="Peptidase_S54_rhomboid_dom"/>
</dbReference>
<dbReference type="InterPro" id="IPR035952">
    <property type="entry name" value="Rhomboid-like_sf"/>
</dbReference>
<dbReference type="PANTHER" id="PTHR43066">
    <property type="entry name" value="RHOMBOID-RELATED PROTEIN"/>
    <property type="match status" value="1"/>
</dbReference>
<dbReference type="Pfam" id="PF01694">
    <property type="entry name" value="Rhomboid"/>
    <property type="match status" value="1"/>
</dbReference>
<dbReference type="SUPFAM" id="SSF144091">
    <property type="entry name" value="Rhomboid-like"/>
    <property type="match status" value="1"/>
</dbReference>
<name>Y1337_MYCTO</name>
<proteinExistence type="predicted"/>
<accession>P9WM20</accession>
<accession>E2IBS6</accession>
<accession>F2GFD9</accession>
<accession>P64815</accession>
<accession>Q10647</accession>
<evidence type="ECO:0000255" key="1"/>
<evidence type="ECO:0000256" key="2">
    <source>
        <dbReference type="SAM" id="MobiDB-lite"/>
    </source>
</evidence>
<evidence type="ECO:0000305" key="3"/>
<protein>
    <recommendedName>
        <fullName>Uncharacterized protein MT1378</fullName>
    </recommendedName>
</protein>
<reference key="1">
    <citation type="journal article" date="2002" name="J. Bacteriol.">
        <title>Whole-genome comparison of Mycobacterium tuberculosis clinical and laboratory strains.</title>
        <authorList>
            <person name="Fleischmann R.D."/>
            <person name="Alland D."/>
            <person name="Eisen J.A."/>
            <person name="Carpenter L."/>
            <person name="White O."/>
            <person name="Peterson J.D."/>
            <person name="DeBoy R.T."/>
            <person name="Dodson R.J."/>
            <person name="Gwinn M.L."/>
            <person name="Haft D.H."/>
            <person name="Hickey E.K."/>
            <person name="Kolonay J.F."/>
            <person name="Nelson W.C."/>
            <person name="Umayam L.A."/>
            <person name="Ermolaeva M.D."/>
            <person name="Salzberg S.L."/>
            <person name="Delcher A."/>
            <person name="Utterback T.R."/>
            <person name="Weidman J.F."/>
            <person name="Khouri H.M."/>
            <person name="Gill J."/>
            <person name="Mikula A."/>
            <person name="Bishai W."/>
            <person name="Jacobs W.R. Jr."/>
            <person name="Venter J.C."/>
            <person name="Fraser C.M."/>
        </authorList>
    </citation>
    <scope>NUCLEOTIDE SEQUENCE [LARGE SCALE GENOMIC DNA]</scope>
    <source>
        <strain>CDC 1551 / Oshkosh</strain>
    </source>
</reference>
<keyword id="KW-1003">Cell membrane</keyword>
<keyword id="KW-0472">Membrane</keyword>
<keyword id="KW-1185">Reference proteome</keyword>
<keyword id="KW-0812">Transmembrane</keyword>
<keyword id="KW-1133">Transmembrane helix</keyword>
<sequence length="240" mass="25703">MGMTPRRKRRGGAVQITRPTGRPRTPTTQTTKRPRWVVGGTTILTFVALLYLVELIDQLSGSRLDVNGIRPLKTDGLWGVIFAPLLHANWHHLMANTIPLLVLGFLMTLAGLSRFVWATAIIWILGGLGTWLIGNVGSSCGPTDHIGASGLIFGWLAFLLVFGLFVRKGWDIVIGLVVLFVYGGILLGAMPVLGQCGGVSWQGHLSGAVAGVVAAYLLSAPERKARALKRAGARSGHPKL</sequence>
<organism>
    <name type="scientific">Mycobacterium tuberculosis (strain CDC 1551 / Oshkosh)</name>
    <dbReference type="NCBI Taxonomy" id="83331"/>
    <lineage>
        <taxon>Bacteria</taxon>
        <taxon>Bacillati</taxon>
        <taxon>Actinomycetota</taxon>
        <taxon>Actinomycetes</taxon>
        <taxon>Mycobacteriales</taxon>
        <taxon>Mycobacteriaceae</taxon>
        <taxon>Mycobacterium</taxon>
        <taxon>Mycobacterium tuberculosis complex</taxon>
    </lineage>
</organism>
<feature type="chain" id="PRO_0000427380" description="Uncharacterized protein MT1378">
    <location>
        <begin position="1"/>
        <end position="240"/>
    </location>
</feature>
<feature type="transmembrane region" description="Helical" evidence="1">
    <location>
        <begin position="36"/>
        <end position="56"/>
    </location>
</feature>
<feature type="transmembrane region" description="Helical" evidence="1">
    <location>
        <begin position="93"/>
        <end position="113"/>
    </location>
</feature>
<feature type="transmembrane region" description="Helical" evidence="1">
    <location>
        <begin position="115"/>
        <end position="135"/>
    </location>
</feature>
<feature type="transmembrane region" description="Helical" evidence="1">
    <location>
        <begin position="146"/>
        <end position="166"/>
    </location>
</feature>
<feature type="transmembrane region" description="Helical" evidence="1">
    <location>
        <begin position="172"/>
        <end position="192"/>
    </location>
</feature>
<feature type="transmembrane region" description="Helical" evidence="1">
    <location>
        <begin position="198"/>
        <end position="218"/>
    </location>
</feature>
<feature type="region of interest" description="Disordered" evidence="2">
    <location>
        <begin position="1"/>
        <end position="32"/>
    </location>
</feature>
<feature type="compositionally biased region" description="Basic residues" evidence="2">
    <location>
        <begin position="1"/>
        <end position="11"/>
    </location>
</feature>
<feature type="compositionally biased region" description="Low complexity" evidence="2">
    <location>
        <begin position="17"/>
        <end position="31"/>
    </location>
</feature>
<comment type="subcellular location">
    <subcellularLocation>
        <location evidence="3">Cell membrane</location>
        <topology evidence="3">Multi-pass membrane protein</topology>
    </subcellularLocation>
</comment>
<comment type="similarity">
    <text evidence="3">To M.leprae ML1171.</text>
</comment>
<comment type="sequence caution" evidence="3">
    <conflict type="erroneous initiation">
        <sequence resource="EMBL-CDS" id="AAK45643"/>
    </conflict>
</comment>